<proteinExistence type="inferred from homology"/>
<organism>
    <name type="scientific">Kluyveromyces lactis (strain ATCC 8585 / CBS 2359 / DSM 70799 / NBRC 1267 / NRRL Y-1140 / WM37)</name>
    <name type="common">Yeast</name>
    <name type="synonym">Candida sphaerica</name>
    <dbReference type="NCBI Taxonomy" id="284590"/>
    <lineage>
        <taxon>Eukaryota</taxon>
        <taxon>Fungi</taxon>
        <taxon>Dikarya</taxon>
        <taxon>Ascomycota</taxon>
        <taxon>Saccharomycotina</taxon>
        <taxon>Saccharomycetes</taxon>
        <taxon>Saccharomycetales</taxon>
        <taxon>Saccharomycetaceae</taxon>
        <taxon>Kluyveromyces</taxon>
    </lineage>
</organism>
<comment type="function">
    <text evidence="1">Required for transport of secretory proteins from the Golgi complex. Catalyzes the transfer of phosphatidylinositol and phosphatidylcholine between membranes in vitro (By similarity).</text>
</comment>
<comment type="subcellular location">
    <subcellularLocation>
        <location evidence="1">Golgi apparatus membrane</location>
        <topology evidence="1">Peripheral membrane protein</topology>
    </subcellularLocation>
</comment>
<protein>
    <recommendedName>
        <fullName>SEC14 cytosolic factor</fullName>
    </recommendedName>
    <alternativeName>
        <fullName>Phosphatidylinositol/phosphatidylcholine transfer protein</fullName>
        <shortName>PI/PC TP</shortName>
    </alternativeName>
</protein>
<dbReference type="EMBL" id="CR382122">
    <property type="protein sequence ID" value="CAH02216.1"/>
    <property type="molecule type" value="Genomic_DNA"/>
</dbReference>
<dbReference type="PIR" id="A37766">
    <property type="entry name" value="A37766"/>
</dbReference>
<dbReference type="RefSeq" id="XP_451823.1">
    <property type="nucleotide sequence ID" value="XM_451823.1"/>
</dbReference>
<dbReference type="SMR" id="P24859"/>
<dbReference type="FunCoup" id="P24859">
    <property type="interactions" value="320"/>
</dbReference>
<dbReference type="STRING" id="284590.P24859"/>
<dbReference type="PaxDb" id="284590-P24859"/>
<dbReference type="KEGG" id="kla:KLLA0_B06479g"/>
<dbReference type="eggNOG" id="KOG1471">
    <property type="taxonomic scope" value="Eukaryota"/>
</dbReference>
<dbReference type="HOGENOM" id="CLU_014001_0_1_1"/>
<dbReference type="InParanoid" id="P24859"/>
<dbReference type="OMA" id="FQYYPQY"/>
<dbReference type="Proteomes" id="UP000000598">
    <property type="component" value="Chromosome B"/>
</dbReference>
<dbReference type="GO" id="GO:0000139">
    <property type="term" value="C:Golgi membrane"/>
    <property type="evidence" value="ECO:0007669"/>
    <property type="project" value="UniProtKB-SubCell"/>
</dbReference>
<dbReference type="GO" id="GO:0015031">
    <property type="term" value="P:protein transport"/>
    <property type="evidence" value="ECO:0007669"/>
    <property type="project" value="UniProtKB-KW"/>
</dbReference>
<dbReference type="CDD" id="cd00170">
    <property type="entry name" value="SEC14"/>
    <property type="match status" value="1"/>
</dbReference>
<dbReference type="FunFam" id="1.10.8.20:FF:000005">
    <property type="entry name" value="SEC14 cytosolic factor"/>
    <property type="match status" value="1"/>
</dbReference>
<dbReference type="FunFam" id="3.40.525.10:FF:000011">
    <property type="entry name" value="SEC14 cytosolic factor"/>
    <property type="match status" value="1"/>
</dbReference>
<dbReference type="Gene3D" id="3.40.525.10">
    <property type="entry name" value="CRAL-TRIO lipid binding domain"/>
    <property type="match status" value="1"/>
</dbReference>
<dbReference type="Gene3D" id="1.10.8.20">
    <property type="entry name" value="N-terminal domain of phosphatidylinositol transfer protein sec14p"/>
    <property type="match status" value="1"/>
</dbReference>
<dbReference type="InterPro" id="IPR001251">
    <property type="entry name" value="CRAL-TRIO_dom"/>
</dbReference>
<dbReference type="InterPro" id="IPR036865">
    <property type="entry name" value="CRAL-TRIO_dom_sf"/>
</dbReference>
<dbReference type="InterPro" id="IPR011074">
    <property type="entry name" value="CRAL/TRIO_N_dom"/>
</dbReference>
<dbReference type="InterPro" id="IPR036273">
    <property type="entry name" value="CRAL/TRIO_N_dom_sf"/>
</dbReference>
<dbReference type="InterPro" id="IPR051026">
    <property type="entry name" value="PI/PC_transfer"/>
</dbReference>
<dbReference type="PANTHER" id="PTHR45657">
    <property type="entry name" value="CRAL-TRIO DOMAIN-CONTAINING PROTEIN YKL091C-RELATED"/>
    <property type="match status" value="1"/>
</dbReference>
<dbReference type="PANTHER" id="PTHR45657:SF1">
    <property type="entry name" value="CRAL-TRIO DOMAIN-CONTAINING PROTEIN YKL091C-RELATED"/>
    <property type="match status" value="1"/>
</dbReference>
<dbReference type="Pfam" id="PF00650">
    <property type="entry name" value="CRAL_TRIO"/>
    <property type="match status" value="1"/>
</dbReference>
<dbReference type="Pfam" id="PF03765">
    <property type="entry name" value="CRAL_TRIO_N"/>
    <property type="match status" value="1"/>
</dbReference>
<dbReference type="PRINTS" id="PR00180">
    <property type="entry name" value="CRETINALDHBP"/>
</dbReference>
<dbReference type="SMART" id="SM01100">
    <property type="entry name" value="CRAL_TRIO_N"/>
    <property type="match status" value="1"/>
</dbReference>
<dbReference type="SMART" id="SM00516">
    <property type="entry name" value="SEC14"/>
    <property type="match status" value="1"/>
</dbReference>
<dbReference type="SUPFAM" id="SSF52087">
    <property type="entry name" value="CRAL/TRIO domain"/>
    <property type="match status" value="1"/>
</dbReference>
<dbReference type="SUPFAM" id="SSF46938">
    <property type="entry name" value="CRAL/TRIO N-terminal domain"/>
    <property type="match status" value="1"/>
</dbReference>
<dbReference type="PROSITE" id="PS50191">
    <property type="entry name" value="CRAL_TRIO"/>
    <property type="match status" value="1"/>
</dbReference>
<gene>
    <name type="primary">SEC14</name>
    <name type="ordered locus">KLLA0B06479g</name>
</gene>
<reference key="1">
    <citation type="journal article" date="1990" name="J. Bacteriol.">
        <title>Cloning and characterization of Kluyveromyces lactis SEC14, a gene whose product stimulates Golgi secretory function in Saccharomyces cerevisiae.</title>
        <authorList>
            <person name="Salama S.R."/>
            <person name="Cleves A.E."/>
            <person name="Malehorn D.E."/>
            <person name="Whitters E.A."/>
            <person name="Bankaitis V.A."/>
        </authorList>
    </citation>
    <scope>NUCLEOTIDE SEQUENCE [GENOMIC DNA]</scope>
</reference>
<reference key="2">
    <citation type="journal article" date="2004" name="Nature">
        <title>Genome evolution in yeasts.</title>
        <authorList>
            <person name="Dujon B."/>
            <person name="Sherman D."/>
            <person name="Fischer G."/>
            <person name="Durrens P."/>
            <person name="Casaregola S."/>
            <person name="Lafontaine I."/>
            <person name="de Montigny J."/>
            <person name="Marck C."/>
            <person name="Neuveglise C."/>
            <person name="Talla E."/>
            <person name="Goffard N."/>
            <person name="Frangeul L."/>
            <person name="Aigle M."/>
            <person name="Anthouard V."/>
            <person name="Babour A."/>
            <person name="Barbe V."/>
            <person name="Barnay S."/>
            <person name="Blanchin S."/>
            <person name="Beckerich J.-M."/>
            <person name="Beyne E."/>
            <person name="Bleykasten C."/>
            <person name="Boisrame A."/>
            <person name="Boyer J."/>
            <person name="Cattolico L."/>
            <person name="Confanioleri F."/>
            <person name="de Daruvar A."/>
            <person name="Despons L."/>
            <person name="Fabre E."/>
            <person name="Fairhead C."/>
            <person name="Ferry-Dumazet H."/>
            <person name="Groppi A."/>
            <person name="Hantraye F."/>
            <person name="Hennequin C."/>
            <person name="Jauniaux N."/>
            <person name="Joyet P."/>
            <person name="Kachouri R."/>
            <person name="Kerrest A."/>
            <person name="Koszul R."/>
            <person name="Lemaire M."/>
            <person name="Lesur I."/>
            <person name="Ma L."/>
            <person name="Muller H."/>
            <person name="Nicaud J.-M."/>
            <person name="Nikolski M."/>
            <person name="Oztas S."/>
            <person name="Ozier-Kalogeropoulos O."/>
            <person name="Pellenz S."/>
            <person name="Potier S."/>
            <person name="Richard G.-F."/>
            <person name="Straub M.-L."/>
            <person name="Suleau A."/>
            <person name="Swennen D."/>
            <person name="Tekaia F."/>
            <person name="Wesolowski-Louvel M."/>
            <person name="Westhof E."/>
            <person name="Wirth B."/>
            <person name="Zeniou-Meyer M."/>
            <person name="Zivanovic Y."/>
            <person name="Bolotin-Fukuhara M."/>
            <person name="Thierry A."/>
            <person name="Bouchier C."/>
            <person name="Caudron B."/>
            <person name="Scarpelli C."/>
            <person name="Gaillardin C."/>
            <person name="Weissenbach J."/>
            <person name="Wincker P."/>
            <person name="Souciet J.-L."/>
        </authorList>
    </citation>
    <scope>NUCLEOTIDE SEQUENCE [LARGE SCALE GENOMIC DNA]</scope>
    <source>
        <strain>ATCC 8585 / CBS 2359 / DSM 70799 / NBRC 1267 / NRRL Y-1140 / WM37</strain>
    </source>
</reference>
<keyword id="KW-0333">Golgi apparatus</keyword>
<keyword id="KW-0472">Membrane</keyword>
<keyword id="KW-0653">Protein transport</keyword>
<keyword id="KW-1185">Reference proteome</keyword>
<keyword id="KW-0813">Transport</keyword>
<feature type="chain" id="PRO_0000210741" description="SEC14 cytosolic factor">
    <location>
        <begin position="1"/>
        <end position="301"/>
    </location>
</feature>
<feature type="domain" description="CRAL-TRIO" evidence="2">
    <location>
        <begin position="97"/>
        <end position="270"/>
    </location>
</feature>
<feature type="region of interest" description="Disordered" evidence="3">
    <location>
        <begin position="9"/>
        <end position="28"/>
    </location>
</feature>
<feature type="compositionally biased region" description="Polar residues" evidence="3">
    <location>
        <begin position="16"/>
        <end position="28"/>
    </location>
</feature>
<feature type="sequence conflict" description="In Ref. 1." evidence="4" ref="1">
    <original>Y</original>
    <variation>T</variation>
    <location>
        <position position="47"/>
    </location>
</feature>
<feature type="sequence conflict" description="In Ref. 1." evidence="4" ref="1">
    <original>KP</original>
    <variation>NT</variation>
    <location>
        <begin position="98"/>
        <end position="99"/>
    </location>
</feature>
<feature type="sequence conflict" description="In Ref. 1." evidence="4" ref="1">
    <original>F</original>
    <variation>T</variation>
    <location>
        <position position="226"/>
    </location>
</feature>
<sequence length="301" mass="34647">MVSEQEILESYPQVCPSGSLSGTPGNLDSEQEAKLKEFRELLESLGYKERLDDSTLLRFLRARKFDLEASKIMYENCEKWRKEFGVDTIFEDFHYEEKPLVAKYYPQYYHKTDNDGRPVYIEELGSVNLTQMYKITTQERMLKNLVWEYEAFVRYRLPACSRKAGYLVETSCTILDLKGISISSAAQVLSYVREASNIGQNYYPERMGKFYLINAPFGFSTAFRLFKPFLDPVTVSKIFILGSSYQKDLLKQIPAENLPKKFGGQSEVSEAEGGLYLSDIGPWREEEYIGPEGEAPKAFQL</sequence>
<name>SEC14_KLULA</name>
<accession>P24859</accession>
<accession>Q6CW66</accession>
<evidence type="ECO:0000250" key="1"/>
<evidence type="ECO:0000255" key="2">
    <source>
        <dbReference type="PROSITE-ProRule" id="PRU00056"/>
    </source>
</evidence>
<evidence type="ECO:0000256" key="3">
    <source>
        <dbReference type="SAM" id="MobiDB-lite"/>
    </source>
</evidence>
<evidence type="ECO:0000305" key="4"/>